<name>RIMP_LISMO</name>
<accession>Q8Y7G0</accession>
<reference key="1">
    <citation type="journal article" date="2001" name="Science">
        <title>Comparative genomics of Listeria species.</title>
        <authorList>
            <person name="Glaser P."/>
            <person name="Frangeul L."/>
            <person name="Buchrieser C."/>
            <person name="Rusniok C."/>
            <person name="Amend A."/>
            <person name="Baquero F."/>
            <person name="Berche P."/>
            <person name="Bloecker H."/>
            <person name="Brandt P."/>
            <person name="Chakraborty T."/>
            <person name="Charbit A."/>
            <person name="Chetouani F."/>
            <person name="Couve E."/>
            <person name="de Daruvar A."/>
            <person name="Dehoux P."/>
            <person name="Domann E."/>
            <person name="Dominguez-Bernal G."/>
            <person name="Duchaud E."/>
            <person name="Durant L."/>
            <person name="Dussurget O."/>
            <person name="Entian K.-D."/>
            <person name="Fsihi H."/>
            <person name="Garcia-del Portillo F."/>
            <person name="Garrido P."/>
            <person name="Gautier L."/>
            <person name="Goebel W."/>
            <person name="Gomez-Lopez N."/>
            <person name="Hain T."/>
            <person name="Hauf J."/>
            <person name="Jackson D."/>
            <person name="Jones L.-M."/>
            <person name="Kaerst U."/>
            <person name="Kreft J."/>
            <person name="Kuhn M."/>
            <person name="Kunst F."/>
            <person name="Kurapkat G."/>
            <person name="Madueno E."/>
            <person name="Maitournam A."/>
            <person name="Mata Vicente J."/>
            <person name="Ng E."/>
            <person name="Nedjari H."/>
            <person name="Nordsiek G."/>
            <person name="Novella S."/>
            <person name="de Pablos B."/>
            <person name="Perez-Diaz J.-C."/>
            <person name="Purcell R."/>
            <person name="Remmel B."/>
            <person name="Rose M."/>
            <person name="Schlueter T."/>
            <person name="Simoes N."/>
            <person name="Tierrez A."/>
            <person name="Vazquez-Boland J.-A."/>
            <person name="Voss H."/>
            <person name="Wehland J."/>
            <person name="Cossart P."/>
        </authorList>
    </citation>
    <scope>NUCLEOTIDE SEQUENCE [LARGE SCALE GENOMIC DNA]</scope>
    <source>
        <strain>ATCC BAA-679 / EGD-e</strain>
    </source>
</reference>
<proteinExistence type="inferred from homology"/>
<gene>
    <name evidence="1" type="primary">rimP</name>
    <name type="ordered locus">lmo1321</name>
</gene>
<comment type="function">
    <text evidence="1">Required for maturation of 30S ribosomal subunits.</text>
</comment>
<comment type="subcellular location">
    <subcellularLocation>
        <location evidence="1">Cytoplasm</location>
    </subcellularLocation>
</comment>
<comment type="similarity">
    <text evidence="1">Belongs to the RimP family.</text>
</comment>
<sequence>MSKVLEQVEAIVAPITDELQLELVDIAFEKEGPNWFLRIFIDKDGGVDIDECAAVSEKVSEKMDENDPITQNYFLEVSSPGAERPLKKEQDFENAVSKYVHVTSYEPIDGRKMWEGTLVSYDGTTLVITITDKTRKITCEIPKDKVAKARLAIQF</sequence>
<feature type="chain" id="PRO_0000181887" description="Ribosome maturation factor RimP">
    <location>
        <begin position="1"/>
        <end position="155"/>
    </location>
</feature>
<organism>
    <name type="scientific">Listeria monocytogenes serovar 1/2a (strain ATCC BAA-679 / EGD-e)</name>
    <dbReference type="NCBI Taxonomy" id="169963"/>
    <lineage>
        <taxon>Bacteria</taxon>
        <taxon>Bacillati</taxon>
        <taxon>Bacillota</taxon>
        <taxon>Bacilli</taxon>
        <taxon>Bacillales</taxon>
        <taxon>Listeriaceae</taxon>
        <taxon>Listeria</taxon>
    </lineage>
</organism>
<protein>
    <recommendedName>
        <fullName evidence="1">Ribosome maturation factor RimP</fullName>
    </recommendedName>
</protein>
<dbReference type="EMBL" id="AL591978">
    <property type="protein sequence ID" value="CAC99399.1"/>
    <property type="molecule type" value="Genomic_DNA"/>
</dbReference>
<dbReference type="PIR" id="AI1239">
    <property type="entry name" value="AI1239"/>
</dbReference>
<dbReference type="RefSeq" id="NP_464846.1">
    <property type="nucleotide sequence ID" value="NC_003210.1"/>
</dbReference>
<dbReference type="RefSeq" id="WP_003732818.1">
    <property type="nucleotide sequence ID" value="NZ_CP149495.1"/>
</dbReference>
<dbReference type="SMR" id="Q8Y7G0"/>
<dbReference type="STRING" id="169963.gene:17593978"/>
<dbReference type="PaxDb" id="169963-lmo1321"/>
<dbReference type="EnsemblBacteria" id="CAC99399">
    <property type="protein sequence ID" value="CAC99399"/>
    <property type="gene ID" value="CAC99399"/>
</dbReference>
<dbReference type="GeneID" id="93239197"/>
<dbReference type="GeneID" id="987701"/>
<dbReference type="KEGG" id="lmo:lmo1321"/>
<dbReference type="PATRIC" id="fig|169963.11.peg.1358"/>
<dbReference type="eggNOG" id="COG0779">
    <property type="taxonomic scope" value="Bacteria"/>
</dbReference>
<dbReference type="HOGENOM" id="CLU_070525_2_0_9"/>
<dbReference type="OrthoDB" id="9805006at2"/>
<dbReference type="PhylomeDB" id="Q8Y7G0"/>
<dbReference type="BioCyc" id="LMON169963:LMO1321-MONOMER"/>
<dbReference type="Proteomes" id="UP000000817">
    <property type="component" value="Chromosome"/>
</dbReference>
<dbReference type="GO" id="GO:0005829">
    <property type="term" value="C:cytosol"/>
    <property type="evidence" value="ECO:0000318"/>
    <property type="project" value="GO_Central"/>
</dbReference>
<dbReference type="GO" id="GO:0000028">
    <property type="term" value="P:ribosomal small subunit assembly"/>
    <property type="evidence" value="ECO:0000318"/>
    <property type="project" value="GO_Central"/>
</dbReference>
<dbReference type="GO" id="GO:0006412">
    <property type="term" value="P:translation"/>
    <property type="evidence" value="ECO:0000318"/>
    <property type="project" value="GO_Central"/>
</dbReference>
<dbReference type="CDD" id="cd01734">
    <property type="entry name" value="YlxS_C"/>
    <property type="match status" value="1"/>
</dbReference>
<dbReference type="FunFam" id="2.30.30.180:FF:000002">
    <property type="entry name" value="Ribosome maturation factor RimP"/>
    <property type="match status" value="1"/>
</dbReference>
<dbReference type="FunFam" id="3.30.300.70:FF:000001">
    <property type="entry name" value="Ribosome maturation factor RimP"/>
    <property type="match status" value="1"/>
</dbReference>
<dbReference type="Gene3D" id="2.30.30.180">
    <property type="entry name" value="Ribosome maturation factor RimP, C-terminal domain"/>
    <property type="match status" value="1"/>
</dbReference>
<dbReference type="Gene3D" id="3.30.300.70">
    <property type="entry name" value="RimP-like superfamily, N-terminal"/>
    <property type="match status" value="1"/>
</dbReference>
<dbReference type="HAMAP" id="MF_01077">
    <property type="entry name" value="RimP"/>
    <property type="match status" value="1"/>
</dbReference>
<dbReference type="InterPro" id="IPR003728">
    <property type="entry name" value="Ribosome_maturation_RimP"/>
</dbReference>
<dbReference type="InterPro" id="IPR028998">
    <property type="entry name" value="RimP_C"/>
</dbReference>
<dbReference type="InterPro" id="IPR036847">
    <property type="entry name" value="RimP_C_sf"/>
</dbReference>
<dbReference type="InterPro" id="IPR028989">
    <property type="entry name" value="RimP_N"/>
</dbReference>
<dbReference type="InterPro" id="IPR035956">
    <property type="entry name" value="RimP_N_sf"/>
</dbReference>
<dbReference type="NCBIfam" id="NF000928">
    <property type="entry name" value="PRK00092.1-2"/>
    <property type="match status" value="1"/>
</dbReference>
<dbReference type="PANTHER" id="PTHR33867">
    <property type="entry name" value="RIBOSOME MATURATION FACTOR RIMP"/>
    <property type="match status" value="1"/>
</dbReference>
<dbReference type="PANTHER" id="PTHR33867:SF1">
    <property type="entry name" value="RIBOSOME MATURATION FACTOR RIMP"/>
    <property type="match status" value="1"/>
</dbReference>
<dbReference type="Pfam" id="PF17384">
    <property type="entry name" value="DUF150_C"/>
    <property type="match status" value="1"/>
</dbReference>
<dbReference type="Pfam" id="PF02576">
    <property type="entry name" value="RimP_N"/>
    <property type="match status" value="1"/>
</dbReference>
<dbReference type="SUPFAM" id="SSF74942">
    <property type="entry name" value="YhbC-like, C-terminal domain"/>
    <property type="match status" value="1"/>
</dbReference>
<dbReference type="SUPFAM" id="SSF75420">
    <property type="entry name" value="YhbC-like, N-terminal domain"/>
    <property type="match status" value="1"/>
</dbReference>
<keyword id="KW-0963">Cytoplasm</keyword>
<keyword id="KW-1185">Reference proteome</keyword>
<keyword id="KW-0690">Ribosome biogenesis</keyword>
<evidence type="ECO:0000255" key="1">
    <source>
        <dbReference type="HAMAP-Rule" id="MF_01077"/>
    </source>
</evidence>